<accession>G3V9Q9</accession>
<protein>
    <recommendedName>
        <fullName>N-acetyllactosaminide alpha-1,3-galactosyltransferase-like 1</fullName>
        <ecNumber evidence="2">2.4.1.87</ecNumber>
    </recommendedName>
</protein>
<keyword id="KW-0325">Glycoprotein</keyword>
<keyword id="KW-0328">Glycosyltransferase</keyword>
<keyword id="KW-0333">Golgi apparatus</keyword>
<keyword id="KW-0464">Manganese</keyword>
<keyword id="KW-0472">Membrane</keyword>
<keyword id="KW-0479">Metal-binding</keyword>
<keyword id="KW-1185">Reference proteome</keyword>
<keyword id="KW-0735">Signal-anchor</keyword>
<keyword id="KW-0808">Transferase</keyword>
<keyword id="KW-0812">Transmembrane</keyword>
<keyword id="KW-1133">Transmembrane helix</keyword>
<proteinExistence type="evidence at transcript level"/>
<comment type="function">
    <text evidence="1">Synthesizes the galactose-alpha(1,3)-galactose group by catalyzing the transfer of a galactose residue, with an alpha-1,3 linkage, on terminal lactosaminide (Gal-beta-1,4-GlcNAc-R) disaccharide borne by a glycoprotein or a glycolipid.</text>
</comment>
<comment type="catalytic activity">
    <reaction evidence="2">
        <text>a beta-D-galactosyl-(1-&gt;4)-N-acetyl-beta-D-glucosaminyl derivative + UDP-alpha-D-galactose = an alpha-D-galactosyl-(1-&gt;3)-beta-D-galactosyl-(1-&gt;4)-N-acetyl-beta-D-glucosaminyl derivative + UDP + H(+)</text>
        <dbReference type="Rhea" id="RHEA:13013"/>
        <dbReference type="ChEBI" id="CHEBI:15378"/>
        <dbReference type="ChEBI" id="CHEBI:58223"/>
        <dbReference type="ChEBI" id="CHEBI:66914"/>
        <dbReference type="ChEBI" id="CHEBI:133507"/>
        <dbReference type="ChEBI" id="CHEBI:138024"/>
        <dbReference type="EC" id="2.4.1.87"/>
    </reaction>
</comment>
<comment type="cofactor">
    <cofactor evidence="2">
        <name>Mn(2+)</name>
        <dbReference type="ChEBI" id="CHEBI:29035"/>
    </cofactor>
    <text evidence="2">Binds 1 Mn(2+) ion per subunit.</text>
</comment>
<comment type="pathway">
    <text evidence="2">Protein modification; protein glycosylation.</text>
</comment>
<comment type="subcellular location">
    <subcellularLocation>
        <location evidence="1">Golgi apparatus</location>
        <location evidence="1">Golgi stack membrane</location>
        <topology evidence="1">Single-pass type II membrane protein</topology>
    </subcellularLocation>
    <text evidence="1">Membrane-bound form in trans cisternae of Golgi.</text>
</comment>
<comment type="domain">
    <text evidence="1">The conserved DXD motif is involved in cofactor binding. The manganese ion interacts with the beta-phosphate group of UDP and may also have a role in catalysis (By similarity).</text>
</comment>
<comment type="miscellaneous">
    <text>This gene is not expressed in humans.</text>
</comment>
<comment type="similarity">
    <text evidence="4">Belongs to the glycosyltransferase 6 family.</text>
</comment>
<evidence type="ECO:0000250" key="1"/>
<evidence type="ECO:0000250" key="2">
    <source>
        <dbReference type="UniProtKB" id="P14769"/>
    </source>
</evidence>
<evidence type="ECO:0000255" key="3"/>
<evidence type="ECO:0000305" key="4"/>
<feature type="chain" id="PRO_0000428937" description="N-acetyllactosaminide alpha-1,3-galactosyltransferase-like 1">
    <location>
        <begin position="1"/>
        <end position="321"/>
    </location>
</feature>
<feature type="topological domain" description="Cytoplasmic" evidence="3">
    <location>
        <begin position="1"/>
        <end position="6"/>
    </location>
</feature>
<feature type="transmembrane region" description="Helical; Signal-anchor for type II membrane protein" evidence="3">
    <location>
        <begin position="7"/>
        <end position="24"/>
    </location>
</feature>
<feature type="topological domain" description="Lumenal" evidence="3">
    <location>
        <begin position="25"/>
        <end position="321"/>
    </location>
</feature>
<feature type="active site" description="Nucleophile" evidence="2">
    <location>
        <position position="277"/>
    </location>
</feature>
<feature type="binding site" evidence="2">
    <location>
        <begin position="95"/>
        <end position="100"/>
    </location>
    <ligand>
        <name>substrate</name>
    </ligand>
</feature>
<feature type="binding site" evidence="2">
    <location>
        <begin position="187"/>
        <end position="189"/>
    </location>
    <ligand>
        <name>substrate</name>
    </ligand>
</feature>
<feature type="binding site" evidence="2">
    <location>
        <begin position="209"/>
        <end position="212"/>
    </location>
    <ligand>
        <name>substrate</name>
    </ligand>
</feature>
<feature type="glycosylation site" description="N-linked (GlcNAc...) asparagine" evidence="3">
    <location>
        <position position="87"/>
    </location>
</feature>
<feature type="glycosylation site" description="N-linked (GlcNAc...) asparagine" evidence="3">
    <location>
        <position position="99"/>
    </location>
</feature>
<feature type="sequence conflict" description="In Ref. 1; AAS92273." evidence="4" ref="1">
    <original>N</original>
    <variation>S</variation>
    <location>
        <position position="194"/>
    </location>
</feature>
<sequence length="321" mass="38343">MQYKKETLLLILLAILLALTQRYSRTKDHLQKMYTCWRDHLEEPQLESWFNPKKRPDVIATTGWLAPVLWEGTYDREVLEQYYKRLNITVGLAVFATGNFSSESLRRFIKSANKYFMVGYNVIFYILADGTSNLPYLELGPLRTLKMWRLSGEEMTYEDSNLRNMNNMRYKIMEHIQYEVNFLFVMTANQIIKNHFGVETLGRSVAQLHAWWYFKQPREFPYERRRKASAFIAFEEGDFYYHSAIVGGTPLDVLDLIEHYIKGIIDDRTNELSSTYERHLNKYFFIKKPVRVLSPEYNWDPRFKTPPEIWHIKVAWQPRIT</sequence>
<dbReference type="EC" id="2.4.1.87" evidence="2"/>
<dbReference type="EMBL" id="AY524048">
    <property type="protein sequence ID" value="AAS92273.1"/>
    <property type="molecule type" value="mRNA"/>
</dbReference>
<dbReference type="EMBL" id="AABR06022315">
    <property type="status" value="NOT_ANNOTATED_CDS"/>
    <property type="molecule type" value="Genomic_DNA"/>
</dbReference>
<dbReference type="EMBL" id="AABR06022316">
    <property type="status" value="NOT_ANNOTATED_CDS"/>
    <property type="molecule type" value="Genomic_DNA"/>
</dbReference>
<dbReference type="EMBL" id="CH474001">
    <property type="protein sequence ID" value="EDL93145.1"/>
    <property type="molecule type" value="Genomic_DNA"/>
</dbReference>
<dbReference type="RefSeq" id="NP_001032672.2">
    <property type="nucleotide sequence ID" value="NM_001037583.2"/>
</dbReference>
<dbReference type="RefSeq" id="XP_006234108.1">
    <property type="nucleotide sequence ID" value="XM_006234046.5"/>
</dbReference>
<dbReference type="RefSeq" id="XP_017447518.1">
    <property type="nucleotide sequence ID" value="XM_017592029.1"/>
</dbReference>
<dbReference type="SMR" id="G3V9Q9"/>
<dbReference type="STRING" id="10116.ENSRNOP00000056765"/>
<dbReference type="CAZy" id="GT6">
    <property type="family name" value="Glycosyltransferase Family 6"/>
</dbReference>
<dbReference type="GlyCosmos" id="G3V9Q9">
    <property type="glycosylation" value="2 sites, No reported glycans"/>
</dbReference>
<dbReference type="GlyGen" id="G3V9Q9">
    <property type="glycosylation" value="2 sites"/>
</dbReference>
<dbReference type="PhosphoSitePlus" id="G3V9Q9"/>
<dbReference type="PaxDb" id="10116-ENSRNOP00000056765"/>
<dbReference type="Ensembl" id="ENSRNOT00000060013.2">
    <property type="protein sequence ID" value="ENSRNOP00000056765.1"/>
    <property type="gene ID" value="ENSRNOG00000042373.2"/>
</dbReference>
<dbReference type="GeneID" id="652927"/>
<dbReference type="KEGG" id="rno:652927"/>
<dbReference type="AGR" id="RGD:1565200"/>
<dbReference type="CTD" id="652927"/>
<dbReference type="RGD" id="1565200">
    <property type="gene designation" value="Ggta1l1"/>
</dbReference>
<dbReference type="eggNOG" id="ENOG502RU0J">
    <property type="taxonomic scope" value="Eukaryota"/>
</dbReference>
<dbReference type="GeneTree" id="ENSGT00950000182858"/>
<dbReference type="HOGENOM" id="CLU_062445_0_1_1"/>
<dbReference type="InParanoid" id="G3V9Q9"/>
<dbReference type="OMA" id="HEVNFLF"/>
<dbReference type="TreeFam" id="TF330991"/>
<dbReference type="UniPathway" id="UPA00378"/>
<dbReference type="PRO" id="PR:G3V9Q9"/>
<dbReference type="Proteomes" id="UP000002494">
    <property type="component" value="Chromosome 3"/>
</dbReference>
<dbReference type="Proteomes" id="UP000234681">
    <property type="component" value="Chromosome 3"/>
</dbReference>
<dbReference type="Bgee" id="ENSRNOG00000042373">
    <property type="expression patterns" value="Expressed in testis"/>
</dbReference>
<dbReference type="GO" id="GO:0005794">
    <property type="term" value="C:Golgi apparatus"/>
    <property type="evidence" value="ECO:0000318"/>
    <property type="project" value="GO_Central"/>
</dbReference>
<dbReference type="GO" id="GO:0032580">
    <property type="term" value="C:Golgi cisterna membrane"/>
    <property type="evidence" value="ECO:0007669"/>
    <property type="project" value="UniProtKB-SubCell"/>
</dbReference>
<dbReference type="GO" id="GO:0031982">
    <property type="term" value="C:vesicle"/>
    <property type="evidence" value="ECO:0000318"/>
    <property type="project" value="GO_Central"/>
</dbReference>
<dbReference type="GO" id="GO:0016757">
    <property type="term" value="F:glycosyltransferase activity"/>
    <property type="evidence" value="ECO:0000318"/>
    <property type="project" value="GO_Central"/>
</dbReference>
<dbReference type="GO" id="GO:0046872">
    <property type="term" value="F:metal ion binding"/>
    <property type="evidence" value="ECO:0007669"/>
    <property type="project" value="UniProtKB-KW"/>
</dbReference>
<dbReference type="GO" id="GO:0047276">
    <property type="term" value="F:N-acetyllactosaminide 3-alpha-galactosyltransferase activity"/>
    <property type="evidence" value="ECO:0007669"/>
    <property type="project" value="UniProtKB-EC"/>
</dbReference>
<dbReference type="GO" id="GO:0005975">
    <property type="term" value="P:carbohydrate metabolic process"/>
    <property type="evidence" value="ECO:0007669"/>
    <property type="project" value="InterPro"/>
</dbReference>
<dbReference type="GO" id="GO:0030259">
    <property type="term" value="P:lipid glycosylation"/>
    <property type="evidence" value="ECO:0000318"/>
    <property type="project" value="GO_Central"/>
</dbReference>
<dbReference type="GO" id="GO:0006486">
    <property type="term" value="P:protein glycosylation"/>
    <property type="evidence" value="ECO:0007669"/>
    <property type="project" value="UniProtKB-UniPathway"/>
</dbReference>
<dbReference type="FunFam" id="3.90.550.10:FF:000022">
    <property type="entry name" value="Histo-blood group ABO system transferase"/>
    <property type="match status" value="1"/>
</dbReference>
<dbReference type="Gene3D" id="3.90.550.10">
    <property type="entry name" value="Spore Coat Polysaccharide Biosynthesis Protein SpsA, Chain A"/>
    <property type="match status" value="1"/>
</dbReference>
<dbReference type="InterPro" id="IPR005076">
    <property type="entry name" value="Glyco_trans_6"/>
</dbReference>
<dbReference type="InterPro" id="IPR029044">
    <property type="entry name" value="Nucleotide-diphossugar_trans"/>
</dbReference>
<dbReference type="PANTHER" id="PTHR10462">
    <property type="entry name" value="GLYCOSYLTRANSFERASE-RELATED"/>
    <property type="match status" value="1"/>
</dbReference>
<dbReference type="PANTHER" id="PTHR10462:SF46">
    <property type="entry name" value="N-ACETYLLACTOSAMINIDE ALPHA-1,3-GALACTOSYLTRANSFERASE-LIKE 1"/>
    <property type="match status" value="1"/>
</dbReference>
<dbReference type="Pfam" id="PF03414">
    <property type="entry name" value="Glyco_transf_6"/>
    <property type="match status" value="1"/>
</dbReference>
<dbReference type="SUPFAM" id="SSF53448">
    <property type="entry name" value="Nucleotide-diphospho-sugar transferases"/>
    <property type="match status" value="1"/>
</dbReference>
<organism>
    <name type="scientific">Rattus norvegicus</name>
    <name type="common">Rat</name>
    <dbReference type="NCBI Taxonomy" id="10116"/>
    <lineage>
        <taxon>Eukaryota</taxon>
        <taxon>Metazoa</taxon>
        <taxon>Chordata</taxon>
        <taxon>Craniata</taxon>
        <taxon>Vertebrata</taxon>
        <taxon>Euteleostomi</taxon>
        <taxon>Mammalia</taxon>
        <taxon>Eutheria</taxon>
        <taxon>Euarchontoglires</taxon>
        <taxon>Glires</taxon>
        <taxon>Rodentia</taxon>
        <taxon>Myomorpha</taxon>
        <taxon>Muroidea</taxon>
        <taxon>Muridae</taxon>
        <taxon>Murinae</taxon>
        <taxon>Rattus</taxon>
    </lineage>
</organism>
<name>GTA1L_RAT</name>
<reference key="1">
    <citation type="submission" date="2004-01" db="EMBL/GenBank/DDBJ databases">
        <title>New rat ABO family members.</title>
        <authorList>
            <person name="Turcot A.-L."/>
            <person name="Cailleau-Thomas A."/>
            <person name="Vaidye B."/>
            <person name="Le Pendu J."/>
        </authorList>
    </citation>
    <scope>NUCLEOTIDE SEQUENCE [MRNA]</scope>
    <source>
        <strain>BDIX</strain>
    </source>
</reference>
<reference key="2">
    <citation type="journal article" date="2004" name="Nature">
        <title>Genome sequence of the Brown Norway rat yields insights into mammalian evolution.</title>
        <authorList>
            <person name="Gibbs R.A."/>
            <person name="Weinstock G.M."/>
            <person name="Metzker M.L."/>
            <person name="Muzny D.M."/>
            <person name="Sodergren E.J."/>
            <person name="Scherer S."/>
            <person name="Scott G."/>
            <person name="Steffen D."/>
            <person name="Worley K.C."/>
            <person name="Burch P.E."/>
            <person name="Okwuonu G."/>
            <person name="Hines S."/>
            <person name="Lewis L."/>
            <person name="Deramo C."/>
            <person name="Delgado O."/>
            <person name="Dugan-Rocha S."/>
            <person name="Miner G."/>
            <person name="Morgan M."/>
            <person name="Hawes A."/>
            <person name="Gill R."/>
            <person name="Holt R.A."/>
            <person name="Adams M.D."/>
            <person name="Amanatides P.G."/>
            <person name="Baden-Tillson H."/>
            <person name="Barnstead M."/>
            <person name="Chin S."/>
            <person name="Evans C.A."/>
            <person name="Ferriera S."/>
            <person name="Fosler C."/>
            <person name="Glodek A."/>
            <person name="Gu Z."/>
            <person name="Jennings D."/>
            <person name="Kraft C.L."/>
            <person name="Nguyen T."/>
            <person name="Pfannkoch C.M."/>
            <person name="Sitter C."/>
            <person name="Sutton G.G."/>
            <person name="Venter J.C."/>
            <person name="Woodage T."/>
            <person name="Smith D."/>
            <person name="Lee H.-M."/>
            <person name="Gustafson E."/>
            <person name="Cahill P."/>
            <person name="Kana A."/>
            <person name="Doucette-Stamm L."/>
            <person name="Weinstock K."/>
            <person name="Fechtel K."/>
            <person name="Weiss R.B."/>
            <person name="Dunn D.M."/>
            <person name="Green E.D."/>
            <person name="Blakesley R.W."/>
            <person name="Bouffard G.G."/>
            <person name="De Jong P.J."/>
            <person name="Osoegawa K."/>
            <person name="Zhu B."/>
            <person name="Marra M."/>
            <person name="Schein J."/>
            <person name="Bosdet I."/>
            <person name="Fjell C."/>
            <person name="Jones S."/>
            <person name="Krzywinski M."/>
            <person name="Mathewson C."/>
            <person name="Siddiqui A."/>
            <person name="Wye N."/>
            <person name="McPherson J."/>
            <person name="Zhao S."/>
            <person name="Fraser C.M."/>
            <person name="Shetty J."/>
            <person name="Shatsman S."/>
            <person name="Geer K."/>
            <person name="Chen Y."/>
            <person name="Abramzon S."/>
            <person name="Nierman W.C."/>
            <person name="Havlak P.H."/>
            <person name="Chen R."/>
            <person name="Durbin K.J."/>
            <person name="Egan A."/>
            <person name="Ren Y."/>
            <person name="Song X.-Z."/>
            <person name="Li B."/>
            <person name="Liu Y."/>
            <person name="Qin X."/>
            <person name="Cawley S."/>
            <person name="Cooney A.J."/>
            <person name="D'Souza L.M."/>
            <person name="Martin K."/>
            <person name="Wu J.Q."/>
            <person name="Gonzalez-Garay M.L."/>
            <person name="Jackson A.R."/>
            <person name="Kalafus K.J."/>
            <person name="McLeod M.P."/>
            <person name="Milosavljevic A."/>
            <person name="Virk D."/>
            <person name="Volkov A."/>
            <person name="Wheeler D.A."/>
            <person name="Zhang Z."/>
            <person name="Bailey J.A."/>
            <person name="Eichler E.E."/>
            <person name="Tuzun E."/>
            <person name="Birney E."/>
            <person name="Mongin E."/>
            <person name="Ureta-Vidal A."/>
            <person name="Woodwark C."/>
            <person name="Zdobnov E."/>
            <person name="Bork P."/>
            <person name="Suyama M."/>
            <person name="Torrents D."/>
            <person name="Alexandersson M."/>
            <person name="Trask B.J."/>
            <person name="Young J.M."/>
            <person name="Huang H."/>
            <person name="Wang H."/>
            <person name="Xing H."/>
            <person name="Daniels S."/>
            <person name="Gietzen D."/>
            <person name="Schmidt J."/>
            <person name="Stevens K."/>
            <person name="Vitt U."/>
            <person name="Wingrove J."/>
            <person name="Camara F."/>
            <person name="Mar Alba M."/>
            <person name="Abril J.F."/>
            <person name="Guigo R."/>
            <person name="Smit A."/>
            <person name="Dubchak I."/>
            <person name="Rubin E.M."/>
            <person name="Couronne O."/>
            <person name="Poliakov A."/>
            <person name="Huebner N."/>
            <person name="Ganten D."/>
            <person name="Goesele C."/>
            <person name="Hummel O."/>
            <person name="Kreitler T."/>
            <person name="Lee Y.-A."/>
            <person name="Monti J."/>
            <person name="Schulz H."/>
            <person name="Zimdahl H."/>
            <person name="Himmelbauer H."/>
            <person name="Lehrach H."/>
            <person name="Jacob H.J."/>
            <person name="Bromberg S."/>
            <person name="Gullings-Handley J."/>
            <person name="Jensen-Seaman M.I."/>
            <person name="Kwitek A.E."/>
            <person name="Lazar J."/>
            <person name="Pasko D."/>
            <person name="Tonellato P.J."/>
            <person name="Twigger S."/>
            <person name="Ponting C.P."/>
            <person name="Duarte J.M."/>
            <person name="Rice S."/>
            <person name="Goodstadt L."/>
            <person name="Beatson S.A."/>
            <person name="Emes R.D."/>
            <person name="Winter E.E."/>
            <person name="Webber C."/>
            <person name="Brandt P."/>
            <person name="Nyakatura G."/>
            <person name="Adetobi M."/>
            <person name="Chiaromonte F."/>
            <person name="Elnitski L."/>
            <person name="Eswara P."/>
            <person name="Hardison R.C."/>
            <person name="Hou M."/>
            <person name="Kolbe D."/>
            <person name="Makova K."/>
            <person name="Miller W."/>
            <person name="Nekrutenko A."/>
            <person name="Riemer C."/>
            <person name="Schwartz S."/>
            <person name="Taylor J."/>
            <person name="Yang S."/>
            <person name="Zhang Y."/>
            <person name="Lindpaintner K."/>
            <person name="Andrews T.D."/>
            <person name="Caccamo M."/>
            <person name="Clamp M."/>
            <person name="Clarke L."/>
            <person name="Curwen V."/>
            <person name="Durbin R.M."/>
            <person name="Eyras E."/>
            <person name="Searle S.M."/>
            <person name="Cooper G.M."/>
            <person name="Batzoglou S."/>
            <person name="Brudno M."/>
            <person name="Sidow A."/>
            <person name="Stone E.A."/>
            <person name="Payseur B.A."/>
            <person name="Bourque G."/>
            <person name="Lopez-Otin C."/>
            <person name="Puente X.S."/>
            <person name="Chakrabarti K."/>
            <person name="Chatterji S."/>
            <person name="Dewey C."/>
            <person name="Pachter L."/>
            <person name="Bray N."/>
            <person name="Yap V.B."/>
            <person name="Caspi A."/>
            <person name="Tesler G."/>
            <person name="Pevzner P.A."/>
            <person name="Haussler D."/>
            <person name="Roskin K.M."/>
            <person name="Baertsch R."/>
            <person name="Clawson H."/>
            <person name="Furey T.S."/>
            <person name="Hinrichs A.S."/>
            <person name="Karolchik D."/>
            <person name="Kent W.J."/>
            <person name="Rosenbloom K.R."/>
            <person name="Trumbower H."/>
            <person name="Weirauch M."/>
            <person name="Cooper D.N."/>
            <person name="Stenson P.D."/>
            <person name="Ma B."/>
            <person name="Brent M."/>
            <person name="Arumugam M."/>
            <person name="Shteynberg D."/>
            <person name="Copley R.R."/>
            <person name="Taylor M.S."/>
            <person name="Riethman H."/>
            <person name="Mudunuri U."/>
            <person name="Peterson J."/>
            <person name="Guyer M."/>
            <person name="Felsenfeld A."/>
            <person name="Old S."/>
            <person name="Mockrin S."/>
            <person name="Collins F.S."/>
        </authorList>
    </citation>
    <scope>NUCLEOTIDE SEQUENCE [LARGE SCALE GENOMIC DNA]</scope>
    <source>
        <strain>Brown Norway</strain>
    </source>
</reference>
<reference key="3">
    <citation type="submission" date="2005-09" db="EMBL/GenBank/DDBJ databases">
        <authorList>
            <person name="Mural R.J."/>
            <person name="Adams M.D."/>
            <person name="Myers E.W."/>
            <person name="Smith H.O."/>
            <person name="Venter J.C."/>
        </authorList>
    </citation>
    <scope>NUCLEOTIDE SEQUENCE [LARGE SCALE GENOMIC DNA]</scope>
    <source>
        <strain>Brown Norway</strain>
    </source>
</reference>
<gene>
    <name type="primary">Ggta1l1</name>
</gene>